<dbReference type="EC" id="2.1.1.45" evidence="1"/>
<dbReference type="EMBL" id="CP000577">
    <property type="protein sequence ID" value="ABN77147.1"/>
    <property type="molecule type" value="Genomic_DNA"/>
</dbReference>
<dbReference type="RefSeq" id="WP_011841401.1">
    <property type="nucleotide sequence ID" value="NC_009049.1"/>
</dbReference>
<dbReference type="SMR" id="A3PLD1"/>
<dbReference type="KEGG" id="rsh:Rsph17029_2044"/>
<dbReference type="HOGENOM" id="CLU_021669_0_0_5"/>
<dbReference type="UniPathway" id="UPA00575"/>
<dbReference type="GO" id="GO:0005829">
    <property type="term" value="C:cytosol"/>
    <property type="evidence" value="ECO:0007669"/>
    <property type="project" value="TreeGrafter"/>
</dbReference>
<dbReference type="GO" id="GO:0004799">
    <property type="term" value="F:thymidylate synthase activity"/>
    <property type="evidence" value="ECO:0007669"/>
    <property type="project" value="UniProtKB-UniRule"/>
</dbReference>
<dbReference type="GO" id="GO:0006231">
    <property type="term" value="P:dTMP biosynthetic process"/>
    <property type="evidence" value="ECO:0007669"/>
    <property type="project" value="UniProtKB-UniRule"/>
</dbReference>
<dbReference type="GO" id="GO:0006235">
    <property type="term" value="P:dTTP biosynthetic process"/>
    <property type="evidence" value="ECO:0007669"/>
    <property type="project" value="UniProtKB-UniRule"/>
</dbReference>
<dbReference type="GO" id="GO:0032259">
    <property type="term" value="P:methylation"/>
    <property type="evidence" value="ECO:0007669"/>
    <property type="project" value="UniProtKB-KW"/>
</dbReference>
<dbReference type="CDD" id="cd00351">
    <property type="entry name" value="TS_Pyrimidine_HMase"/>
    <property type="match status" value="1"/>
</dbReference>
<dbReference type="Gene3D" id="3.30.572.10">
    <property type="entry name" value="Thymidylate synthase/dCMP hydroxymethylase domain"/>
    <property type="match status" value="1"/>
</dbReference>
<dbReference type="HAMAP" id="MF_00008">
    <property type="entry name" value="Thymidy_synth_bact"/>
    <property type="match status" value="1"/>
</dbReference>
<dbReference type="InterPro" id="IPR045097">
    <property type="entry name" value="Thymidate_synth/dCMP_Mease"/>
</dbReference>
<dbReference type="InterPro" id="IPR023451">
    <property type="entry name" value="Thymidate_synth/dCMP_Mease_dom"/>
</dbReference>
<dbReference type="InterPro" id="IPR036926">
    <property type="entry name" value="Thymidate_synth/dCMP_Mease_sf"/>
</dbReference>
<dbReference type="InterPro" id="IPR000398">
    <property type="entry name" value="Thymidylate_synthase"/>
</dbReference>
<dbReference type="InterPro" id="IPR020940">
    <property type="entry name" value="Thymidylate_synthase_AS"/>
</dbReference>
<dbReference type="NCBIfam" id="NF002497">
    <property type="entry name" value="PRK01827.1-3"/>
    <property type="match status" value="1"/>
</dbReference>
<dbReference type="NCBIfam" id="TIGR03284">
    <property type="entry name" value="thym_sym"/>
    <property type="match status" value="1"/>
</dbReference>
<dbReference type="PANTHER" id="PTHR11548">
    <property type="entry name" value="THYMIDYLATE SYNTHASE 1"/>
    <property type="match status" value="1"/>
</dbReference>
<dbReference type="PANTHER" id="PTHR11548:SF1">
    <property type="entry name" value="THYMIDYLATE SYNTHASE 1"/>
    <property type="match status" value="1"/>
</dbReference>
<dbReference type="Pfam" id="PF00303">
    <property type="entry name" value="Thymidylat_synt"/>
    <property type="match status" value="1"/>
</dbReference>
<dbReference type="PRINTS" id="PR00108">
    <property type="entry name" value="THYMDSNTHASE"/>
</dbReference>
<dbReference type="SUPFAM" id="SSF55831">
    <property type="entry name" value="Thymidylate synthase/dCMP hydroxymethylase"/>
    <property type="match status" value="1"/>
</dbReference>
<dbReference type="PROSITE" id="PS00091">
    <property type="entry name" value="THYMIDYLATE_SYNTHASE"/>
    <property type="match status" value="1"/>
</dbReference>
<organism>
    <name type="scientific">Cereibacter sphaeroides (strain ATCC 17029 / ATH 2.4.9)</name>
    <name type="common">Rhodobacter sphaeroides</name>
    <dbReference type="NCBI Taxonomy" id="349101"/>
    <lineage>
        <taxon>Bacteria</taxon>
        <taxon>Pseudomonadati</taxon>
        <taxon>Pseudomonadota</taxon>
        <taxon>Alphaproteobacteria</taxon>
        <taxon>Rhodobacterales</taxon>
        <taxon>Paracoccaceae</taxon>
        <taxon>Cereibacter</taxon>
    </lineage>
</organism>
<gene>
    <name evidence="1" type="primary">thyA</name>
    <name type="ordered locus">Rsph17029_2044</name>
</gene>
<name>TYSY_CERS1</name>
<protein>
    <recommendedName>
        <fullName evidence="1">Thymidylate synthase</fullName>
        <shortName evidence="1">TS</shortName>
        <shortName evidence="1">TSase</shortName>
        <ecNumber evidence="1">2.1.1.45</ecNumber>
    </recommendedName>
</protein>
<comment type="function">
    <text evidence="1">Catalyzes the reductive methylation of 2'-deoxyuridine-5'-monophosphate (dUMP) to 2'-deoxythymidine-5'-monophosphate (dTMP) while utilizing 5,10-methylenetetrahydrofolate (mTHF) as the methyl donor and reductant in the reaction, yielding dihydrofolate (DHF) as a by-product. This enzymatic reaction provides an intracellular de novo source of dTMP, an essential precursor for DNA biosynthesis.</text>
</comment>
<comment type="catalytic activity">
    <reaction evidence="1">
        <text>dUMP + (6R)-5,10-methylene-5,6,7,8-tetrahydrofolate = 7,8-dihydrofolate + dTMP</text>
        <dbReference type="Rhea" id="RHEA:12104"/>
        <dbReference type="ChEBI" id="CHEBI:15636"/>
        <dbReference type="ChEBI" id="CHEBI:57451"/>
        <dbReference type="ChEBI" id="CHEBI:63528"/>
        <dbReference type="ChEBI" id="CHEBI:246422"/>
        <dbReference type="EC" id="2.1.1.45"/>
    </reaction>
</comment>
<comment type="pathway">
    <text evidence="1">Pyrimidine metabolism; dTTP biosynthesis.</text>
</comment>
<comment type="subunit">
    <text evidence="1">Homodimer.</text>
</comment>
<comment type="subcellular location">
    <subcellularLocation>
        <location evidence="1">Cytoplasm</location>
    </subcellularLocation>
</comment>
<comment type="similarity">
    <text evidence="1">Belongs to the thymidylate synthase family. Bacterial-type ThyA subfamily.</text>
</comment>
<accession>A3PLD1</accession>
<reference key="1">
    <citation type="submission" date="2007-02" db="EMBL/GenBank/DDBJ databases">
        <title>Complete sequence of chromosome 1 of Rhodobacter sphaeroides ATCC 17029.</title>
        <authorList>
            <person name="Copeland A."/>
            <person name="Lucas S."/>
            <person name="Lapidus A."/>
            <person name="Barry K."/>
            <person name="Detter J.C."/>
            <person name="Glavina del Rio T."/>
            <person name="Hammon N."/>
            <person name="Israni S."/>
            <person name="Dalin E."/>
            <person name="Tice H."/>
            <person name="Pitluck S."/>
            <person name="Kiss H."/>
            <person name="Brettin T."/>
            <person name="Bruce D."/>
            <person name="Han C."/>
            <person name="Tapia R."/>
            <person name="Gilna P."/>
            <person name="Schmutz J."/>
            <person name="Larimer F."/>
            <person name="Land M."/>
            <person name="Hauser L."/>
            <person name="Kyrpides N."/>
            <person name="Mikhailova N."/>
            <person name="Richardson P."/>
            <person name="Mackenzie C."/>
            <person name="Choudhary M."/>
            <person name="Donohue T.J."/>
            <person name="Kaplan S."/>
        </authorList>
    </citation>
    <scope>NUCLEOTIDE SEQUENCE [LARGE SCALE GENOMIC DNA]</scope>
    <source>
        <strain>ATCC 17029 / ATH 2.4.9</strain>
    </source>
</reference>
<sequence>MAHPEQQYLDLLAQTLERGDRRVDRTGVGTLSLFGAMLRFDLSDGQVPILTTKRVYWKTAVKEMLWFLTGGTNIRPLLQENVRIWSDWPLAAYRRESGEEISQAAFEQRILEDEAFAARWGELGPVYGRQWRRWLGPDGREHDQIAALIETLRTNPSSRRMLFHAWNVAEVGQMALPPCHMVYQYHVTSDGRLNALLYQRSVDLLLGAPFNFVGAAALQLMIAQQAGLVPGDLVWVGGDTHLYLNHLDQAREQTGRAPRDWPRMRLLRQADGIDDYRIEDFAVEGYDPHPAIAAEVAV</sequence>
<feature type="chain" id="PRO_0000321480" description="Thymidylate synthase">
    <location>
        <begin position="1"/>
        <end position="298"/>
    </location>
</feature>
<feature type="active site" description="Nucleophile" evidence="1">
    <location>
        <position position="179"/>
    </location>
</feature>
<feature type="binding site" description="in other chain" evidence="1">
    <location>
        <position position="25"/>
    </location>
    <ligand>
        <name>dUMP</name>
        <dbReference type="ChEBI" id="CHEBI:246422"/>
        <note>ligand shared between dimeric partners</note>
    </ligand>
</feature>
<feature type="binding site" evidence="1">
    <location>
        <begin position="159"/>
        <end position="160"/>
    </location>
    <ligand>
        <name>dUMP</name>
        <dbReference type="ChEBI" id="CHEBI:246422"/>
        <note>ligand shared between dimeric partners</note>
    </ligand>
</feature>
<feature type="binding site" description="in other chain" evidence="1">
    <location>
        <begin position="200"/>
        <end position="203"/>
    </location>
    <ligand>
        <name>dUMP</name>
        <dbReference type="ChEBI" id="CHEBI:246422"/>
        <note>ligand shared between dimeric partners</note>
    </ligand>
</feature>
<feature type="binding site" evidence="1">
    <location>
        <position position="203"/>
    </location>
    <ligand>
        <name>(6R)-5,10-methylene-5,6,7,8-tetrahydrofolate</name>
        <dbReference type="ChEBI" id="CHEBI:15636"/>
    </ligand>
</feature>
<feature type="binding site" description="in other chain" evidence="1">
    <location>
        <position position="211"/>
    </location>
    <ligand>
        <name>dUMP</name>
        <dbReference type="ChEBI" id="CHEBI:246422"/>
        <note>ligand shared between dimeric partners</note>
    </ligand>
</feature>
<feature type="binding site" description="in other chain" evidence="1">
    <location>
        <begin position="241"/>
        <end position="243"/>
    </location>
    <ligand>
        <name>dUMP</name>
        <dbReference type="ChEBI" id="CHEBI:246422"/>
        <note>ligand shared between dimeric partners</note>
    </ligand>
</feature>
<feature type="binding site" evidence="1">
    <location>
        <position position="297"/>
    </location>
    <ligand>
        <name>(6R)-5,10-methylene-5,6,7,8-tetrahydrofolate</name>
        <dbReference type="ChEBI" id="CHEBI:15636"/>
    </ligand>
</feature>
<proteinExistence type="inferred from homology"/>
<keyword id="KW-0963">Cytoplasm</keyword>
<keyword id="KW-0489">Methyltransferase</keyword>
<keyword id="KW-0545">Nucleotide biosynthesis</keyword>
<keyword id="KW-0808">Transferase</keyword>
<evidence type="ECO:0000255" key="1">
    <source>
        <dbReference type="HAMAP-Rule" id="MF_00008"/>
    </source>
</evidence>